<accession>Q9D8K8</accession>
<accession>Q3TTM8</accession>
<keyword id="KW-0001">2Fe-2S</keyword>
<keyword id="KW-0350">Heme biosynthesis</keyword>
<keyword id="KW-0408">Iron</keyword>
<keyword id="KW-0411">Iron-sulfur</keyword>
<keyword id="KW-0472">Membrane</keyword>
<keyword id="KW-0479">Metal-binding</keyword>
<keyword id="KW-0496">Mitochondrion</keyword>
<keyword id="KW-0999">Mitochondrion inner membrane</keyword>
<keyword id="KW-1185">Reference proteome</keyword>
<keyword id="KW-0677">Repeat</keyword>
<keyword id="KW-0812">Transmembrane</keyword>
<keyword id="KW-1133">Transmembrane helix</keyword>
<keyword id="KW-0813">Transport</keyword>
<name>S2539_MOUSE</name>
<gene>
    <name evidence="6" type="primary">Slc25a39</name>
    <name evidence="6" type="synonym">D11Ertd333e</name>
</gene>
<proteinExistence type="evidence at transcript level"/>
<evidence type="ECO:0000250" key="1">
    <source>
        <dbReference type="UniProtKB" id="Q9BZJ4"/>
    </source>
</evidence>
<evidence type="ECO:0000255" key="2"/>
<evidence type="ECO:0000269" key="3">
    <source>
    </source>
</evidence>
<evidence type="ECO:0000269" key="4">
    <source>
    </source>
</evidence>
<evidence type="ECO:0000305" key="5"/>
<evidence type="ECO:0000312" key="6">
    <source>
        <dbReference type="MGI" id="MGI:1196386"/>
    </source>
</evidence>
<sequence>MDDQDPGGISPLQQMVASGAGAVVTSLFMTPLDVVKVRLQSQRPSATSELTTPSRFWSLSYTKSSSALQSPGKCLLYCNGVLEPLYLCPNGTRCATWFQDPTRFTGTLDAFVKIVRHEGTRTLWSGLPATLVMTVPATAIYFTAYDQLKAFLCGQSLTSDLYAPMVAGALARMGTVTVVSPLELVRTKLQAQHVSYRELASSVQAAVTQGGWRSLWLGWGPTALRDVPFSALYWFNYELVKSWLSGLRPKDQTSVGISFVAGGISGMVAATLTLPFDVVKTQRQMSLGAVEAVRVKPPRVDSTWLLLRRIRAESGTRGLFAGFLPRIIKAAPSCAIMISTYEFGKSFFQRLNQEQPLGR</sequence>
<reference key="1">
    <citation type="journal article" date="2005" name="Science">
        <title>The transcriptional landscape of the mammalian genome.</title>
        <authorList>
            <person name="Carninci P."/>
            <person name="Kasukawa T."/>
            <person name="Katayama S."/>
            <person name="Gough J."/>
            <person name="Frith M.C."/>
            <person name="Maeda N."/>
            <person name="Oyama R."/>
            <person name="Ravasi T."/>
            <person name="Lenhard B."/>
            <person name="Wells C."/>
            <person name="Kodzius R."/>
            <person name="Shimokawa K."/>
            <person name="Bajic V.B."/>
            <person name="Brenner S.E."/>
            <person name="Batalov S."/>
            <person name="Forrest A.R."/>
            <person name="Zavolan M."/>
            <person name="Davis M.J."/>
            <person name="Wilming L.G."/>
            <person name="Aidinis V."/>
            <person name="Allen J.E."/>
            <person name="Ambesi-Impiombato A."/>
            <person name="Apweiler R."/>
            <person name="Aturaliya R.N."/>
            <person name="Bailey T.L."/>
            <person name="Bansal M."/>
            <person name="Baxter L."/>
            <person name="Beisel K.W."/>
            <person name="Bersano T."/>
            <person name="Bono H."/>
            <person name="Chalk A.M."/>
            <person name="Chiu K.P."/>
            <person name="Choudhary V."/>
            <person name="Christoffels A."/>
            <person name="Clutterbuck D.R."/>
            <person name="Crowe M.L."/>
            <person name="Dalla E."/>
            <person name="Dalrymple B.P."/>
            <person name="de Bono B."/>
            <person name="Della Gatta G."/>
            <person name="di Bernardo D."/>
            <person name="Down T."/>
            <person name="Engstrom P."/>
            <person name="Fagiolini M."/>
            <person name="Faulkner G."/>
            <person name="Fletcher C.F."/>
            <person name="Fukushima T."/>
            <person name="Furuno M."/>
            <person name="Futaki S."/>
            <person name="Gariboldi M."/>
            <person name="Georgii-Hemming P."/>
            <person name="Gingeras T.R."/>
            <person name="Gojobori T."/>
            <person name="Green R.E."/>
            <person name="Gustincich S."/>
            <person name="Harbers M."/>
            <person name="Hayashi Y."/>
            <person name="Hensch T.K."/>
            <person name="Hirokawa N."/>
            <person name="Hill D."/>
            <person name="Huminiecki L."/>
            <person name="Iacono M."/>
            <person name="Ikeo K."/>
            <person name="Iwama A."/>
            <person name="Ishikawa T."/>
            <person name="Jakt M."/>
            <person name="Kanapin A."/>
            <person name="Katoh M."/>
            <person name="Kawasawa Y."/>
            <person name="Kelso J."/>
            <person name="Kitamura H."/>
            <person name="Kitano H."/>
            <person name="Kollias G."/>
            <person name="Krishnan S.P."/>
            <person name="Kruger A."/>
            <person name="Kummerfeld S.K."/>
            <person name="Kurochkin I.V."/>
            <person name="Lareau L.F."/>
            <person name="Lazarevic D."/>
            <person name="Lipovich L."/>
            <person name="Liu J."/>
            <person name="Liuni S."/>
            <person name="McWilliam S."/>
            <person name="Madan Babu M."/>
            <person name="Madera M."/>
            <person name="Marchionni L."/>
            <person name="Matsuda H."/>
            <person name="Matsuzawa S."/>
            <person name="Miki H."/>
            <person name="Mignone F."/>
            <person name="Miyake S."/>
            <person name="Morris K."/>
            <person name="Mottagui-Tabar S."/>
            <person name="Mulder N."/>
            <person name="Nakano N."/>
            <person name="Nakauchi H."/>
            <person name="Ng P."/>
            <person name="Nilsson R."/>
            <person name="Nishiguchi S."/>
            <person name="Nishikawa S."/>
            <person name="Nori F."/>
            <person name="Ohara O."/>
            <person name="Okazaki Y."/>
            <person name="Orlando V."/>
            <person name="Pang K.C."/>
            <person name="Pavan W.J."/>
            <person name="Pavesi G."/>
            <person name="Pesole G."/>
            <person name="Petrovsky N."/>
            <person name="Piazza S."/>
            <person name="Reed J."/>
            <person name="Reid J.F."/>
            <person name="Ring B.Z."/>
            <person name="Ringwald M."/>
            <person name="Rost B."/>
            <person name="Ruan Y."/>
            <person name="Salzberg S.L."/>
            <person name="Sandelin A."/>
            <person name="Schneider C."/>
            <person name="Schoenbach C."/>
            <person name="Sekiguchi K."/>
            <person name="Semple C.A."/>
            <person name="Seno S."/>
            <person name="Sessa L."/>
            <person name="Sheng Y."/>
            <person name="Shibata Y."/>
            <person name="Shimada H."/>
            <person name="Shimada K."/>
            <person name="Silva D."/>
            <person name="Sinclair B."/>
            <person name="Sperling S."/>
            <person name="Stupka E."/>
            <person name="Sugiura K."/>
            <person name="Sultana R."/>
            <person name="Takenaka Y."/>
            <person name="Taki K."/>
            <person name="Tammoja K."/>
            <person name="Tan S.L."/>
            <person name="Tang S."/>
            <person name="Taylor M.S."/>
            <person name="Tegner J."/>
            <person name="Teichmann S.A."/>
            <person name="Ueda H.R."/>
            <person name="van Nimwegen E."/>
            <person name="Verardo R."/>
            <person name="Wei C.L."/>
            <person name="Yagi K."/>
            <person name="Yamanishi H."/>
            <person name="Zabarovsky E."/>
            <person name="Zhu S."/>
            <person name="Zimmer A."/>
            <person name="Hide W."/>
            <person name="Bult C."/>
            <person name="Grimmond S.M."/>
            <person name="Teasdale R.D."/>
            <person name="Liu E.T."/>
            <person name="Brusic V."/>
            <person name="Quackenbush J."/>
            <person name="Wahlestedt C."/>
            <person name="Mattick J.S."/>
            <person name="Hume D.A."/>
            <person name="Kai C."/>
            <person name="Sasaki D."/>
            <person name="Tomaru Y."/>
            <person name="Fukuda S."/>
            <person name="Kanamori-Katayama M."/>
            <person name="Suzuki M."/>
            <person name="Aoki J."/>
            <person name="Arakawa T."/>
            <person name="Iida J."/>
            <person name="Imamura K."/>
            <person name="Itoh M."/>
            <person name="Kato T."/>
            <person name="Kawaji H."/>
            <person name="Kawagashira N."/>
            <person name="Kawashima T."/>
            <person name="Kojima M."/>
            <person name="Kondo S."/>
            <person name="Konno H."/>
            <person name="Nakano K."/>
            <person name="Ninomiya N."/>
            <person name="Nishio T."/>
            <person name="Okada M."/>
            <person name="Plessy C."/>
            <person name="Shibata K."/>
            <person name="Shiraki T."/>
            <person name="Suzuki S."/>
            <person name="Tagami M."/>
            <person name="Waki K."/>
            <person name="Watahiki A."/>
            <person name="Okamura-Oho Y."/>
            <person name="Suzuki H."/>
            <person name="Kawai J."/>
            <person name="Hayashizaki Y."/>
        </authorList>
    </citation>
    <scope>NUCLEOTIDE SEQUENCE [LARGE SCALE MRNA]</scope>
    <source>
        <strain>C57BL/6J</strain>
        <tissue>Pancreas</tissue>
        <tissue>Testis</tissue>
        <tissue>Wolffian duct</tissue>
    </source>
</reference>
<reference key="2">
    <citation type="journal article" date="2009" name="Cell Metab.">
        <title>Discovery of genes essential for heme biosynthesis through large-scale gene expression analysis.</title>
        <authorList>
            <person name="Nilsson R."/>
            <person name="Schultz I.J."/>
            <person name="Pierce E.L."/>
            <person name="Soltis K.A."/>
            <person name="Naranuntarat A."/>
            <person name="Ward D.M."/>
            <person name="Baughman J.M."/>
            <person name="Paradkar P.N."/>
            <person name="Kingsley P.D."/>
            <person name="Culotta V.C."/>
            <person name="Kaplan J."/>
            <person name="Palis J."/>
            <person name="Paw B.H."/>
            <person name="Mootha V.K."/>
        </authorList>
    </citation>
    <scope>TISSUE SPECIFICITY</scope>
    <scope>DEVELOPMENTAL STAGE</scope>
</reference>
<reference key="3">
    <citation type="journal article" date="2021" name="Nature">
        <title>SLC25A39 is necessary for mitochondrial glutathione import in mammalian cells.</title>
        <authorList>
            <person name="Wang Y."/>
            <person name="Yen F.S."/>
            <person name="Zhu X.G."/>
            <person name="Timson R.C."/>
            <person name="Weber R."/>
            <person name="Xing C."/>
            <person name="Liu Y."/>
            <person name="Allwein B."/>
            <person name="Luo H."/>
            <person name="Yeh H.W."/>
            <person name="Heissel S."/>
            <person name="Unlu G."/>
            <person name="Gamazon E.R."/>
            <person name="Kharas M.G."/>
            <person name="Hite R."/>
            <person name="Birsoy K."/>
        </authorList>
    </citation>
    <scope>FUNCTION</scope>
    <scope>DISRUPTION PHENOTYPE</scope>
    <scope>TRANSPORTER ACTIVITY</scope>
</reference>
<protein>
    <recommendedName>
        <fullName evidence="5">Mitochondrial glutathione transporter SLC25A39</fullName>
    </recommendedName>
    <alternativeName>
        <fullName evidence="5">Solute carrier family 25 member 39</fullName>
    </alternativeName>
</protein>
<organism>
    <name type="scientific">Mus musculus</name>
    <name type="common">Mouse</name>
    <dbReference type="NCBI Taxonomy" id="10090"/>
    <lineage>
        <taxon>Eukaryota</taxon>
        <taxon>Metazoa</taxon>
        <taxon>Chordata</taxon>
        <taxon>Craniata</taxon>
        <taxon>Vertebrata</taxon>
        <taxon>Euteleostomi</taxon>
        <taxon>Mammalia</taxon>
        <taxon>Eutheria</taxon>
        <taxon>Euarchontoglires</taxon>
        <taxon>Glires</taxon>
        <taxon>Rodentia</taxon>
        <taxon>Myomorpha</taxon>
        <taxon>Muroidea</taxon>
        <taxon>Muridae</taxon>
        <taxon>Murinae</taxon>
        <taxon>Mus</taxon>
        <taxon>Mus</taxon>
    </lineage>
</organism>
<feature type="chain" id="PRO_0000090597" description="Mitochondrial glutathione transporter SLC25A39">
    <location>
        <begin position="1"/>
        <end position="359"/>
    </location>
</feature>
<feature type="topological domain" description="Mitochondrial intermembrane" evidence="5">
    <location>
        <begin position="1"/>
        <end position="14"/>
    </location>
</feature>
<feature type="transmembrane region" description="Helical; Name=1" evidence="2">
    <location>
        <begin position="15"/>
        <end position="35"/>
    </location>
</feature>
<feature type="topological domain" description="Mitochondrial matrix" evidence="5">
    <location>
        <begin position="36"/>
        <end position="121"/>
    </location>
</feature>
<feature type="transmembrane region" description="Helical; Name=2" evidence="2">
    <location>
        <begin position="122"/>
        <end position="142"/>
    </location>
</feature>
<feature type="topological domain" description="Mitochondrial intermembrane" evidence="5">
    <location>
        <begin position="143"/>
        <end position="164"/>
    </location>
</feature>
<feature type="transmembrane region" description="Helical; Name=3" evidence="2">
    <location>
        <begin position="165"/>
        <end position="185"/>
    </location>
</feature>
<feature type="topological domain" description="Mitochondrial matrix" evidence="5">
    <location>
        <begin position="186"/>
        <end position="214"/>
    </location>
</feature>
<feature type="transmembrane region" description="Helical; Name=4" evidence="2">
    <location>
        <begin position="215"/>
        <end position="235"/>
    </location>
</feature>
<feature type="topological domain" description="Mitochondrial intermembrane" evidence="5">
    <location>
        <begin position="236"/>
        <end position="255"/>
    </location>
</feature>
<feature type="transmembrane region" description="Helical; Name=5" evidence="2">
    <location>
        <begin position="256"/>
        <end position="276"/>
    </location>
</feature>
<feature type="topological domain" description="Mitochondrial matrix" evidence="5">
    <location>
        <begin position="277"/>
        <end position="317"/>
    </location>
</feature>
<feature type="transmembrane region" description="Helical; Name=6" evidence="2">
    <location>
        <begin position="318"/>
        <end position="338"/>
    </location>
</feature>
<feature type="topological domain" description="Mitochondrial intermembrane" evidence="5">
    <location>
        <begin position="339"/>
        <end position="359"/>
    </location>
</feature>
<feature type="repeat" description="Solcar 1">
    <location>
        <begin position="9"/>
        <end position="151"/>
    </location>
</feature>
<feature type="repeat" description="Solcar 2">
    <location>
        <begin position="159"/>
        <end position="243"/>
    </location>
</feature>
<feature type="repeat" description="Solcar 3">
    <location>
        <begin position="253"/>
        <end position="347"/>
    </location>
</feature>
<feature type="binding site" evidence="1">
    <location>
        <position position="74"/>
    </location>
    <ligand>
        <name>[2Fe-2S] cluster</name>
        <dbReference type="ChEBI" id="CHEBI:190135"/>
    </ligand>
</feature>
<feature type="binding site" evidence="1">
    <location>
        <position position="78"/>
    </location>
    <ligand>
        <name>[2Fe-2S] cluster</name>
        <dbReference type="ChEBI" id="CHEBI:190135"/>
    </ligand>
</feature>
<feature type="binding site" evidence="1">
    <location>
        <position position="88"/>
    </location>
    <ligand>
        <name>[2Fe-2S] cluster</name>
        <dbReference type="ChEBI" id="CHEBI:190135"/>
    </ligand>
</feature>
<feature type="binding site" evidence="1">
    <location>
        <position position="94"/>
    </location>
    <ligand>
        <name>[2Fe-2S] cluster</name>
        <dbReference type="ChEBI" id="CHEBI:190135"/>
    </ligand>
</feature>
<dbReference type="EMBL" id="AK007934">
    <property type="protein sequence ID" value="BAB25360.1"/>
    <property type="molecule type" value="mRNA"/>
</dbReference>
<dbReference type="EMBL" id="AK078417">
    <property type="protein sequence ID" value="BAC37264.1"/>
    <property type="molecule type" value="mRNA"/>
</dbReference>
<dbReference type="EMBL" id="AK161289">
    <property type="protein sequence ID" value="BAE36297.1"/>
    <property type="molecule type" value="mRNA"/>
</dbReference>
<dbReference type="CCDS" id="CCDS25498.1"/>
<dbReference type="RefSeq" id="NP_080818.1">
    <property type="nucleotide sequence ID" value="NM_026542.3"/>
</dbReference>
<dbReference type="RefSeq" id="XP_006534097.1">
    <property type="nucleotide sequence ID" value="XM_006534034.2"/>
</dbReference>
<dbReference type="RefSeq" id="XP_006534098.1">
    <property type="nucleotide sequence ID" value="XM_006534035.1"/>
</dbReference>
<dbReference type="RefSeq" id="XP_030102115.1">
    <property type="nucleotide sequence ID" value="XM_030246255.1"/>
</dbReference>
<dbReference type="SMR" id="Q9D8K8"/>
<dbReference type="FunCoup" id="Q9D8K8">
    <property type="interactions" value="1239"/>
</dbReference>
<dbReference type="STRING" id="10090.ENSMUSP00000018821"/>
<dbReference type="GlyGen" id="Q9D8K8">
    <property type="glycosylation" value="2 sites"/>
</dbReference>
<dbReference type="iPTMnet" id="Q9D8K8"/>
<dbReference type="PhosphoSitePlus" id="Q9D8K8"/>
<dbReference type="PaxDb" id="10090-ENSMUSP00000018821"/>
<dbReference type="ProteomicsDB" id="256668"/>
<dbReference type="Pumba" id="Q9D8K8"/>
<dbReference type="Antibodypedia" id="17434">
    <property type="antibodies" value="36 antibodies from 15 providers"/>
</dbReference>
<dbReference type="DNASU" id="68066"/>
<dbReference type="Ensembl" id="ENSMUST00000018821.9">
    <property type="protein sequence ID" value="ENSMUSP00000018821.3"/>
    <property type="gene ID" value="ENSMUSG00000018677.10"/>
</dbReference>
<dbReference type="GeneID" id="68066"/>
<dbReference type="KEGG" id="mmu:68066"/>
<dbReference type="UCSC" id="uc007lrt.3">
    <property type="organism name" value="mouse"/>
</dbReference>
<dbReference type="AGR" id="MGI:1196386"/>
<dbReference type="CTD" id="51629"/>
<dbReference type="MGI" id="MGI:1196386">
    <property type="gene designation" value="Slc25a39"/>
</dbReference>
<dbReference type="VEuPathDB" id="HostDB:ENSMUSG00000018677"/>
<dbReference type="eggNOG" id="KOG0761">
    <property type="taxonomic scope" value="Eukaryota"/>
</dbReference>
<dbReference type="GeneTree" id="ENSGT00940000156382"/>
<dbReference type="InParanoid" id="Q9D8K8"/>
<dbReference type="OMA" id="DQTSVGA"/>
<dbReference type="OrthoDB" id="1747031at2759"/>
<dbReference type="PhylomeDB" id="Q9D8K8"/>
<dbReference type="TreeFam" id="TF314720"/>
<dbReference type="BioGRID-ORCS" id="68066">
    <property type="hits" value="0 hits in 63 CRISPR screens"/>
</dbReference>
<dbReference type="ChiTaRS" id="Slc25a39">
    <property type="organism name" value="mouse"/>
</dbReference>
<dbReference type="PRO" id="PR:Q9D8K8"/>
<dbReference type="Proteomes" id="UP000000589">
    <property type="component" value="Chromosome 11"/>
</dbReference>
<dbReference type="RNAct" id="Q9D8K8">
    <property type="molecule type" value="protein"/>
</dbReference>
<dbReference type="Bgee" id="ENSMUSG00000018677">
    <property type="expression patterns" value="Expressed in right kidney and 175 other cell types or tissues"/>
</dbReference>
<dbReference type="ExpressionAtlas" id="Q9D8K8">
    <property type="expression patterns" value="baseline and differential"/>
</dbReference>
<dbReference type="GO" id="GO:0005743">
    <property type="term" value="C:mitochondrial inner membrane"/>
    <property type="evidence" value="ECO:0007669"/>
    <property type="project" value="UniProtKB-SubCell"/>
</dbReference>
<dbReference type="GO" id="GO:0005739">
    <property type="term" value="C:mitochondrion"/>
    <property type="evidence" value="ECO:0007005"/>
    <property type="project" value="MGI"/>
</dbReference>
<dbReference type="GO" id="GO:0051537">
    <property type="term" value="F:2 iron, 2 sulfur cluster binding"/>
    <property type="evidence" value="ECO:0000250"/>
    <property type="project" value="UniProtKB"/>
</dbReference>
<dbReference type="GO" id="GO:0034634">
    <property type="term" value="F:glutathione transmembrane transporter activity"/>
    <property type="evidence" value="ECO:0007669"/>
    <property type="project" value="Ensembl"/>
</dbReference>
<dbReference type="GO" id="GO:0046872">
    <property type="term" value="F:metal ion binding"/>
    <property type="evidence" value="ECO:0007669"/>
    <property type="project" value="UniProtKB-KW"/>
</dbReference>
<dbReference type="GO" id="GO:0071281">
    <property type="term" value="P:cellular response to iron ion"/>
    <property type="evidence" value="ECO:0007669"/>
    <property type="project" value="Ensembl"/>
</dbReference>
<dbReference type="GO" id="GO:0160007">
    <property type="term" value="P:glutathione import into mitochondrion"/>
    <property type="evidence" value="ECO:0000250"/>
    <property type="project" value="UniProtKB"/>
</dbReference>
<dbReference type="GO" id="GO:0006783">
    <property type="term" value="P:heme biosynthetic process"/>
    <property type="evidence" value="ECO:0007669"/>
    <property type="project" value="UniProtKB-KW"/>
</dbReference>
<dbReference type="FunFam" id="1.50.40.10:FF:000203">
    <property type="entry name" value="Solute carrier family 25 member 39"/>
    <property type="match status" value="1"/>
</dbReference>
<dbReference type="FunFam" id="1.50.40.10:FF:000159">
    <property type="entry name" value="solute carrier family 25 member 39 isoform X1"/>
    <property type="match status" value="1"/>
</dbReference>
<dbReference type="Gene3D" id="1.50.40.10">
    <property type="entry name" value="Mitochondrial carrier domain"/>
    <property type="match status" value="2"/>
</dbReference>
<dbReference type="InterPro" id="IPR018108">
    <property type="entry name" value="Mitochondrial_sb/sol_carrier"/>
</dbReference>
<dbReference type="InterPro" id="IPR023395">
    <property type="entry name" value="Mt_carrier_dom_sf"/>
</dbReference>
<dbReference type="InterPro" id="IPR045315">
    <property type="entry name" value="Mtm1-like"/>
</dbReference>
<dbReference type="PANTHER" id="PTHR45760">
    <property type="entry name" value="FI19922P1-RELATED"/>
    <property type="match status" value="1"/>
</dbReference>
<dbReference type="PANTHER" id="PTHR45760:SF1">
    <property type="entry name" value="MITOCHONDRIAL GLUTATHIONE TRANSPORTER SLC25A39-RELATED"/>
    <property type="match status" value="1"/>
</dbReference>
<dbReference type="Pfam" id="PF00153">
    <property type="entry name" value="Mito_carr"/>
    <property type="match status" value="4"/>
</dbReference>
<dbReference type="SUPFAM" id="SSF103506">
    <property type="entry name" value="Mitochondrial carrier"/>
    <property type="match status" value="1"/>
</dbReference>
<dbReference type="PROSITE" id="PS50920">
    <property type="entry name" value="SOLCAR"/>
    <property type="match status" value="3"/>
</dbReference>
<comment type="function">
    <text evidence="1 4">Mitochondrial transporter required for glutathione import into mitochondria (PubMed:34707288). Glutathione, which plays key roles in oxidative metabolism, is produced exclusively in the cytosol and is imported in many organelles (By similarity). Mitochondrial glutathione is required for the activity and stability of proteins containing iron-sulfur clusters, as well as erythropoiesis (PubMed:34707288).</text>
</comment>
<comment type="catalytic activity">
    <reaction evidence="4">
        <text>glutathione(in) = glutathione(out)</text>
        <dbReference type="Rhea" id="RHEA:74819"/>
        <dbReference type="ChEBI" id="CHEBI:57925"/>
    </reaction>
</comment>
<comment type="activity regulation">
    <text evidence="1">The activity of SLC25A39 is regulated by levels of mitochondrial glutathione via its ability to bind [2Fe-2S] iron-sulfur cluster. Upon physiological levels of mitochondrial glutathione, glutathione prevents iron-sulfur-binding to SLC25A39 promoting cleavage and degradation by AFG3L2. Upon depletion of mitochondrial glutathione, SLC25A39 binds iron-sulfur, preventing cleavage and degradation by AFG3L2.</text>
</comment>
<comment type="subcellular location">
    <subcellularLocation>
        <location evidence="1">Mitochondrion inner membrane</location>
        <topology evidence="2">Multi-pass membrane protein</topology>
    </subcellularLocation>
</comment>
<comment type="tissue specificity">
    <text evidence="3">Abundant expression in bone marrow, spleen, testis and kidney.</text>
</comment>
<comment type="developmental stage">
    <text evidence="3">Highly express in primitive erythroblast that fill yorlk sac blood islands at early somite pair stages, and in fetal liver at 12.5 dpc.</text>
</comment>
<comment type="PTM">
    <text evidence="1">Cleaved and degraded by AFG3L2; degradation by AFG3L2 is regulated by the ability of SLC25A39 to bind iron-sulfur. In absence of mitochondrial glutathione, SLC25A39 binds iron-sulfur, preventing cleavage and degradation by AFG3L2. The presence of mitochondrial glutathione prevents iron-sulfur-binding to SLC25A39, promoting cleavage and degradation by AFG3L2.</text>
</comment>
<comment type="disruption phenotype">
    <text evidence="4">Embryonic lethality at dpc 13.5 (PubMed:34707288). Embryos are pale due to a severely anemic phenotype (PubMed:34707288). Conditional deletion in the erythroid lineage also leads to severe anemia, characterized by a complete absence of Ter119(+) cells, iron overload and increased apoptosis in fetal liver cells (PubMed:34707288). Cells lacking both Slc25a39 and Slc25a40 show defects in the activity and stability of proteins containing iron-sulfur clusters (PubMed:34707288).</text>
</comment>
<comment type="similarity">
    <text evidence="5">Belongs to the mitochondrial carrier (TC 2.A.29) family.</text>
</comment>